<keyword id="KW-0002">3D-structure</keyword>
<keyword id="KW-0968">Cytoplasmic vesicle</keyword>
<keyword id="KW-0256">Endoplasmic reticulum</keyword>
<keyword id="KW-0325">Glycoprotein</keyword>
<keyword id="KW-0375">Hydrogen ion transport</keyword>
<keyword id="KW-0406">Ion transport</keyword>
<keyword id="KW-0472">Membrane</keyword>
<keyword id="KW-1185">Reference proteome</keyword>
<keyword id="KW-0732">Signal</keyword>
<keyword id="KW-0770">Synapse</keyword>
<keyword id="KW-0812">Transmembrane</keyword>
<keyword id="KW-1133">Transmembrane helix</keyword>
<keyword id="KW-0813">Transport</keyword>
<comment type="function">
    <text evidence="1 2 4">Accessory subunit of the proton-transporting vacuolar (V)-ATPase protein pump, which is required for luminal acidification of secretory vesicles (PubMed:32165585). Guides the V-type ATPase into specialized subcellular compartments, such as neuroendocrine regulated secretory vesicles or the ruffled border of the osteoclast, thereby regulating its activity. Involved in membrane trafficking and Ca(2+)-dependent membrane fusion. May play a role in the assembly of the V-type ATPase complex. In aerobic conditions, involved in intracellular iron homeostasis, thus triggering the activity of Fe(2+) prolyl hydroxylase (PHD) enzymes, and leading to HIF1A hydroxylation and subsequent proteasomal degradation (By similarity). In islets of Langerhans cells, may regulate the acidification of dense-core secretory granules (By similarity).</text>
</comment>
<comment type="subunit">
    <text evidence="1 4">Accessory component of the multisubunit proton-transporting vacuolar (V)-ATPase protein pump (PubMed:32165585). Interacts (via N-terminus) with ATP6AP2 (via N-terminus) (PubMed:32165585). Interacts with RNASEK (By similarity). Interacts with TMEM106B (via C-terminus) (By similarity).</text>
</comment>
<comment type="subcellular location">
    <subcellularLocation>
        <location evidence="1">Endoplasmic reticulum membrane</location>
        <topology evidence="1">Single-pass type I membrane protein</topology>
    </subcellularLocation>
    <subcellularLocation>
        <location evidence="1">Endoplasmic reticulum-Golgi intermediate compartment membrane</location>
    </subcellularLocation>
    <subcellularLocation>
        <location evidence="4">Cytoplasmic vesicle</location>
        <location evidence="4">Secretory vesicle</location>
        <location evidence="4">Synaptic vesicle membrane</location>
        <topology evidence="5">Single-pass type I membrane protein</topology>
    </subcellularLocation>
    <subcellularLocation>
        <location evidence="4">Cytoplasmic vesicle</location>
        <location evidence="4">Clathrin-coated vesicle membrane</location>
        <topology evidence="5">Single-pass type I membrane protein</topology>
    </subcellularLocation>
    <text evidence="1">Not detected in trans-Golgi network.</text>
</comment>
<comment type="tissue specificity">
    <text evidence="4">Expressed in brain (at protein level).</text>
</comment>
<comment type="PTM">
    <text evidence="1">N-glycosylated.</text>
</comment>
<comment type="similarity">
    <text evidence="5">Belongs to the vacuolar ATPase subunit S1 family.</text>
</comment>
<reference key="1">
    <citation type="journal article" date="2000" name="Brain Res. Mol. Brain Res.">
        <title>Age-dependent increase in C7-1 gene expression in rat frontal cortex.</title>
        <authorList>
            <person name="Hung H."/>
            <person name="Tsai M.J."/>
            <person name="Wu H.C."/>
            <person name="Lee E.H.Y."/>
        </authorList>
    </citation>
    <scope>NUCLEOTIDE SEQUENCE [MRNA]</scope>
    <source>
        <strain>Sprague-Dawley</strain>
        <tissue>Brain</tissue>
    </source>
</reference>
<reference evidence="6 7 8 9 10 11" key="2">
    <citation type="journal article" date="2020" name="Science">
        <title>Structure of V-ATPase from the mammalian brain.</title>
        <authorList>
            <person name="Abbas Y.M."/>
            <person name="Wu D."/>
            <person name="Bueler S.A."/>
            <person name="Robinson C.V."/>
            <person name="Rubinstein J.L."/>
        </authorList>
    </citation>
    <scope>STRUCTURE BY ELECTRON MICROSCOPY (3.80 ANGSTROMS)</scope>
    <scope>FUNCTION</scope>
    <scope>IDENTIFICATION IN THE V-ATPASE COMPLEX</scope>
    <scope>SUBCELLULAR LOCATION</scope>
    <scope>IDENTIFICATION BY MASS SPECTROMETRY</scope>
    <scope>TISSUE SPECIFICITY</scope>
</reference>
<name>VAS1_RAT</name>
<protein>
    <recommendedName>
        <fullName>V-type proton ATPase subunit S1</fullName>
        <shortName>V-ATPase subunit S1</shortName>
    </recommendedName>
    <alternativeName>
        <fullName>C7-1 protein</fullName>
    </alternativeName>
    <alternativeName>
        <fullName>V-ATPase Ac45 subunit</fullName>
    </alternativeName>
    <alternativeName>
        <fullName>V-ATPase S1 accessory protein</fullName>
    </alternativeName>
    <alternativeName>
        <fullName>Vacuolar proton pump subunit S1</fullName>
    </alternativeName>
</protein>
<organism>
    <name type="scientific">Rattus norvegicus</name>
    <name type="common">Rat</name>
    <dbReference type="NCBI Taxonomy" id="10116"/>
    <lineage>
        <taxon>Eukaryota</taxon>
        <taxon>Metazoa</taxon>
        <taxon>Chordata</taxon>
        <taxon>Craniata</taxon>
        <taxon>Vertebrata</taxon>
        <taxon>Euteleostomi</taxon>
        <taxon>Mammalia</taxon>
        <taxon>Eutheria</taxon>
        <taxon>Euarchontoglires</taxon>
        <taxon>Glires</taxon>
        <taxon>Rodentia</taxon>
        <taxon>Myomorpha</taxon>
        <taxon>Muroidea</taxon>
        <taxon>Muridae</taxon>
        <taxon>Murinae</taxon>
        <taxon>Rattus</taxon>
    </lineage>
</organism>
<accession>O54715</accession>
<feature type="signal peptide" evidence="3">
    <location>
        <begin position="1"/>
        <end position="32"/>
    </location>
</feature>
<feature type="chain" id="PRO_0000002545" description="V-type proton ATPase subunit S1">
    <location>
        <begin position="33"/>
        <end position="463"/>
    </location>
</feature>
<feature type="propeptide" id="PRO_0000454043" evidence="2">
    <location>
        <begin position="33"/>
        <end position="225"/>
    </location>
</feature>
<feature type="topological domain" description="Lumenal" evidence="3">
    <location>
        <begin position="33"/>
        <end position="412"/>
    </location>
</feature>
<feature type="transmembrane region" description="Helical" evidence="3">
    <location>
        <begin position="413"/>
        <end position="433"/>
    </location>
</feature>
<feature type="topological domain" description="Cytoplasmic" evidence="3">
    <location>
        <begin position="434"/>
        <end position="463"/>
    </location>
</feature>
<feature type="site" description="Cleavage; by furin" evidence="2">
    <location>
        <begin position="225"/>
        <end position="226"/>
    </location>
</feature>
<feature type="glycosylation site" description="N-linked (GlcNAc...) asparagine" evidence="3">
    <location>
        <position position="164"/>
    </location>
</feature>
<feature type="glycosylation site" description="N-linked (GlcNAc...) asparagine" evidence="3">
    <location>
        <position position="255"/>
    </location>
</feature>
<feature type="glycosylation site" description="N-linked (GlcNAc...) asparagine" evidence="3">
    <location>
        <position position="267"/>
    </location>
</feature>
<feature type="glycosylation site" description="N-linked (GlcNAc...) asparagine" evidence="3">
    <location>
        <position position="290"/>
    </location>
</feature>
<feature type="glycosylation site" description="N-linked (GlcNAc...) asparagine" evidence="3">
    <location>
        <position position="297"/>
    </location>
</feature>
<feature type="glycosylation site" description="N-linked (GlcNAc...) asparagine" evidence="3">
    <location>
        <position position="344"/>
    </location>
</feature>
<feature type="glycosylation site" description="N-linked (GlcNAc...) asparagine" evidence="3">
    <location>
        <position position="351"/>
    </location>
</feature>
<feature type="glycosylation site" description="N-linked (GlcNAc...) asparagine" evidence="3">
    <location>
        <position position="399"/>
    </location>
</feature>
<feature type="strand" evidence="12">
    <location>
        <begin position="252"/>
        <end position="272"/>
    </location>
</feature>
<feature type="strand" evidence="12">
    <location>
        <begin position="275"/>
        <end position="278"/>
    </location>
</feature>
<feature type="helix" evidence="12">
    <location>
        <begin position="280"/>
        <end position="283"/>
    </location>
</feature>
<feature type="strand" evidence="12">
    <location>
        <begin position="301"/>
        <end position="309"/>
    </location>
</feature>
<feature type="helix" evidence="12">
    <location>
        <begin position="310"/>
        <end position="312"/>
    </location>
</feature>
<feature type="strand" evidence="12">
    <location>
        <begin position="315"/>
        <end position="325"/>
    </location>
</feature>
<feature type="strand" evidence="12">
    <location>
        <begin position="329"/>
        <end position="343"/>
    </location>
</feature>
<feature type="strand" evidence="12">
    <location>
        <begin position="346"/>
        <end position="352"/>
    </location>
</feature>
<feature type="strand" evidence="12">
    <location>
        <begin position="356"/>
        <end position="358"/>
    </location>
</feature>
<feature type="strand" evidence="12">
    <location>
        <begin position="361"/>
        <end position="366"/>
    </location>
</feature>
<feature type="strand" evidence="12">
    <location>
        <begin position="368"/>
        <end position="370"/>
    </location>
</feature>
<feature type="helix" evidence="12">
    <location>
        <begin position="372"/>
        <end position="374"/>
    </location>
</feature>
<feature type="strand" evidence="12">
    <location>
        <begin position="385"/>
        <end position="396"/>
    </location>
</feature>
<feature type="strand" evidence="12">
    <location>
        <begin position="408"/>
        <end position="411"/>
    </location>
</feature>
<feature type="helix" evidence="12">
    <location>
        <begin position="417"/>
        <end position="441"/>
    </location>
</feature>
<proteinExistence type="evidence at protein level"/>
<sequence>MMAATVVSRIRTGTRWAPVLWLLLSLVAVAAAVAAEQQVPLVLWSSDRDLWAPVADTHEGHITSDMQLSTYLDPALELGPRNVLLFLQDKLSIEDFTAYGGVFGNKQDSAFSNLENALDLAPSSLVLPAVDWYAISTLTTYLQEKLGASPLHVDLATLKELKLNASLPALLLIRLPYTASSGLMAPREVLTGNDEVIGQVLSTLESEDVPYTAALTAVRPSRVARDVAMVAGGLGRQLLQTQVASPAIHPPVSYNDTAPRILFWAQNFSVAYKDEWKDLTSLTFGVENLNLTGSFWNDSFAMLSLTYEPLFGATVTFKFILASRFYPVSARYWFTMERLEIHSNGSVAHFNVSQVTGPSIYSFHCEYVSSLSKKGSLLVTNVPSLWQMTLHNFQIQAFNVTGEQFSYASDCAGFFSPGIWMGLLTTLFMLFIFTYGLHMILSLKTMDRFDDRKGPTITLTQIV</sequence>
<dbReference type="EMBL" id="AF035387">
    <property type="protein sequence ID" value="AAB88008.1"/>
    <property type="molecule type" value="mRNA"/>
</dbReference>
<dbReference type="RefSeq" id="NP_113973.1">
    <property type="nucleotide sequence ID" value="NM_031785.1"/>
</dbReference>
<dbReference type="PDB" id="6VQ6">
    <property type="method" value="EM"/>
    <property type="resolution" value="3.90 A"/>
    <property type="chains" value="c=1-463"/>
</dbReference>
<dbReference type="PDB" id="6VQ7">
    <property type="method" value="EM"/>
    <property type="resolution" value="4.00 A"/>
    <property type="chains" value="c=1-463"/>
</dbReference>
<dbReference type="PDB" id="6VQ8">
    <property type="method" value="EM"/>
    <property type="resolution" value="3.90 A"/>
    <property type="chains" value="c=1-463"/>
</dbReference>
<dbReference type="PDB" id="6VQC">
    <property type="method" value="EM"/>
    <property type="resolution" value="3.80 A"/>
    <property type="chains" value="c=1-463"/>
</dbReference>
<dbReference type="PDB" id="6VQG">
    <property type="method" value="EM"/>
    <property type="resolution" value="4.20 A"/>
    <property type="chains" value="c=1-463"/>
</dbReference>
<dbReference type="PDB" id="6VQH">
    <property type="method" value="EM"/>
    <property type="resolution" value="4.40 A"/>
    <property type="chains" value="c=1-463"/>
</dbReference>
<dbReference type="PDB" id="7UZF">
    <property type="method" value="EM"/>
    <property type="resolution" value="3.80 A"/>
    <property type="chains" value="c=1-463"/>
</dbReference>
<dbReference type="PDB" id="7UZG">
    <property type="method" value="EM"/>
    <property type="resolution" value="3.70 A"/>
    <property type="chains" value="c=1-463"/>
</dbReference>
<dbReference type="PDB" id="7UZH">
    <property type="method" value="EM"/>
    <property type="resolution" value="3.80 A"/>
    <property type="chains" value="c=1-463"/>
</dbReference>
<dbReference type="PDB" id="7UZI">
    <property type="method" value="EM"/>
    <property type="resolution" value="3.90 A"/>
    <property type="chains" value="c=1-463"/>
</dbReference>
<dbReference type="PDB" id="9B8O">
    <property type="method" value="EM"/>
    <property type="resolution" value="3.20 A"/>
    <property type="chains" value="P=1-463"/>
</dbReference>
<dbReference type="PDB" id="9BRB">
    <property type="method" value="EM"/>
    <property type="resolution" value="3.60 A"/>
    <property type="chains" value="P=1-463"/>
</dbReference>
<dbReference type="PDB" id="9BRC">
    <property type="method" value="EM"/>
    <property type="resolution" value="3.90 A"/>
    <property type="chains" value="P=1-463"/>
</dbReference>
<dbReference type="PDB" id="9BRD">
    <property type="method" value="EM"/>
    <property type="resolution" value="3.50 A"/>
    <property type="chains" value="P=1-463"/>
</dbReference>
<dbReference type="PDBsum" id="6VQ6"/>
<dbReference type="PDBsum" id="6VQ7"/>
<dbReference type="PDBsum" id="6VQ8"/>
<dbReference type="PDBsum" id="6VQC"/>
<dbReference type="PDBsum" id="6VQG"/>
<dbReference type="PDBsum" id="6VQH"/>
<dbReference type="PDBsum" id="7UZF"/>
<dbReference type="PDBsum" id="7UZG"/>
<dbReference type="PDBsum" id="7UZH"/>
<dbReference type="PDBsum" id="7UZI"/>
<dbReference type="PDBsum" id="9B8O"/>
<dbReference type="PDBsum" id="9BRB"/>
<dbReference type="PDBsum" id="9BRC"/>
<dbReference type="PDBsum" id="9BRD"/>
<dbReference type="EMDB" id="EMD-21348"/>
<dbReference type="EMDB" id="EMD-21349"/>
<dbReference type="EMDB" id="EMD-21350"/>
<dbReference type="EMDB" id="EMD-26909"/>
<dbReference type="EMDB" id="EMD-26910"/>
<dbReference type="EMDB" id="EMD-26911"/>
<dbReference type="EMDB" id="EMD-26912"/>
<dbReference type="EMDB" id="EMD-44350"/>
<dbReference type="SMR" id="O54715"/>
<dbReference type="BioGRID" id="249780">
    <property type="interactions" value="1"/>
</dbReference>
<dbReference type="CORUM" id="O54715"/>
<dbReference type="FunCoup" id="O54715">
    <property type="interactions" value="1567"/>
</dbReference>
<dbReference type="IntAct" id="O54715">
    <property type="interactions" value="3"/>
</dbReference>
<dbReference type="MINT" id="O54715"/>
<dbReference type="STRING" id="10116.ENSRNOP00000069530"/>
<dbReference type="GlyCosmos" id="O54715">
    <property type="glycosylation" value="8 sites, No reported glycans"/>
</dbReference>
<dbReference type="GlyGen" id="O54715">
    <property type="glycosylation" value="8 sites"/>
</dbReference>
<dbReference type="iPTMnet" id="O54715"/>
<dbReference type="PhosphoSitePlus" id="O54715"/>
<dbReference type="PaxDb" id="10116-ENSRNOP00000053134"/>
<dbReference type="GeneID" id="83615"/>
<dbReference type="KEGG" id="rno:83615"/>
<dbReference type="AGR" id="RGD:620423"/>
<dbReference type="CTD" id="537"/>
<dbReference type="RGD" id="620423">
    <property type="gene designation" value="Atp6ap1"/>
</dbReference>
<dbReference type="eggNOG" id="KOG3868">
    <property type="taxonomic scope" value="Eukaryota"/>
</dbReference>
<dbReference type="InParanoid" id="O54715"/>
<dbReference type="OrthoDB" id="9985059at2759"/>
<dbReference type="PhylomeDB" id="O54715"/>
<dbReference type="Reactome" id="R-RNO-77387">
    <property type="pathway name" value="Insulin receptor recycling"/>
</dbReference>
<dbReference type="Reactome" id="R-RNO-8980692">
    <property type="pathway name" value="RHOA GTPase cycle"/>
</dbReference>
<dbReference type="Reactome" id="R-RNO-917977">
    <property type="pathway name" value="Transferrin endocytosis and recycling"/>
</dbReference>
<dbReference type="Reactome" id="R-RNO-983712">
    <property type="pathway name" value="Ion channel transport"/>
</dbReference>
<dbReference type="PRO" id="PR:O54715"/>
<dbReference type="Proteomes" id="UP000002494">
    <property type="component" value="Unplaced"/>
</dbReference>
<dbReference type="GO" id="GO:0030665">
    <property type="term" value="C:clathrin-coated vesicle membrane"/>
    <property type="evidence" value="ECO:0007669"/>
    <property type="project" value="UniProtKB-SubCell"/>
</dbReference>
<dbReference type="GO" id="GO:0005789">
    <property type="term" value="C:endoplasmic reticulum membrane"/>
    <property type="evidence" value="ECO:0007669"/>
    <property type="project" value="UniProtKB-SubCell"/>
</dbReference>
<dbReference type="GO" id="GO:0033116">
    <property type="term" value="C:endoplasmic reticulum-Golgi intermediate compartment membrane"/>
    <property type="evidence" value="ECO:0007669"/>
    <property type="project" value="UniProtKB-SubCell"/>
</dbReference>
<dbReference type="GO" id="GO:0010008">
    <property type="term" value="C:endosome membrane"/>
    <property type="evidence" value="ECO:0000266"/>
    <property type="project" value="RGD"/>
</dbReference>
<dbReference type="GO" id="GO:0016020">
    <property type="term" value="C:membrane"/>
    <property type="evidence" value="ECO:0000266"/>
    <property type="project" value="RGD"/>
</dbReference>
<dbReference type="GO" id="GO:0033176">
    <property type="term" value="C:proton-transporting V-type ATPase complex"/>
    <property type="evidence" value="ECO:0000318"/>
    <property type="project" value="GO_Central"/>
</dbReference>
<dbReference type="GO" id="GO:0030672">
    <property type="term" value="C:synaptic vesicle membrane"/>
    <property type="evidence" value="ECO:0000314"/>
    <property type="project" value="SynGO"/>
</dbReference>
<dbReference type="GO" id="GO:0001671">
    <property type="term" value="F:ATPase activator activity"/>
    <property type="evidence" value="ECO:0000266"/>
    <property type="project" value="RGD"/>
</dbReference>
<dbReference type="GO" id="GO:0031267">
    <property type="term" value="F:small GTPase binding"/>
    <property type="evidence" value="ECO:0000250"/>
    <property type="project" value="UniProtKB"/>
</dbReference>
<dbReference type="GO" id="GO:0141109">
    <property type="term" value="F:transporter activator activity"/>
    <property type="evidence" value="ECO:0000266"/>
    <property type="project" value="RGD"/>
</dbReference>
<dbReference type="GO" id="GO:0036295">
    <property type="term" value="P:cellular response to increased oxygen levels"/>
    <property type="evidence" value="ECO:0000250"/>
    <property type="project" value="UniProtKB"/>
</dbReference>
<dbReference type="GO" id="GO:0099638">
    <property type="term" value="P:endosome to plasma membrane protein transport"/>
    <property type="evidence" value="ECO:0000250"/>
    <property type="project" value="UniProtKB"/>
</dbReference>
<dbReference type="GO" id="GO:0006879">
    <property type="term" value="P:intracellular iron ion homeostasis"/>
    <property type="evidence" value="ECO:0000250"/>
    <property type="project" value="UniProtKB"/>
</dbReference>
<dbReference type="GO" id="GO:0036035">
    <property type="term" value="P:osteoclast development"/>
    <property type="evidence" value="ECO:0000250"/>
    <property type="project" value="CAFA"/>
</dbReference>
<dbReference type="GO" id="GO:0030641">
    <property type="term" value="P:regulation of cellular pH"/>
    <property type="evidence" value="ECO:0000318"/>
    <property type="project" value="GO_Central"/>
</dbReference>
<dbReference type="GO" id="GO:0097401">
    <property type="term" value="P:synaptic vesicle lumen acidification"/>
    <property type="evidence" value="ECO:0000266"/>
    <property type="project" value="RGD"/>
</dbReference>
<dbReference type="FunFam" id="2.40.160.110:FF:000003">
    <property type="entry name" value="ATPase H+ transporting accessory protein 1"/>
    <property type="match status" value="1"/>
</dbReference>
<dbReference type="Gene3D" id="2.40.160.110">
    <property type="match status" value="1"/>
</dbReference>
<dbReference type="InterPro" id="IPR008388">
    <property type="entry name" value="Ac45_acc_su"/>
</dbReference>
<dbReference type="InterPro" id="IPR046756">
    <property type="entry name" value="VAS1/VOA1_TM"/>
</dbReference>
<dbReference type="InterPro" id="IPR046755">
    <property type="entry name" value="VAS1_LD"/>
</dbReference>
<dbReference type="PANTHER" id="PTHR12471:SF2">
    <property type="entry name" value="V-TYPE PROTON ATPASE SUBUNIT S1"/>
    <property type="match status" value="1"/>
</dbReference>
<dbReference type="PANTHER" id="PTHR12471">
    <property type="entry name" value="VACUOLAR ATP SYNTHASE SUBUNIT S1"/>
    <property type="match status" value="1"/>
</dbReference>
<dbReference type="Pfam" id="PF20520">
    <property type="entry name" value="Ac45-VOA1_TM"/>
    <property type="match status" value="1"/>
</dbReference>
<dbReference type="Pfam" id="PF05827">
    <property type="entry name" value="VAS1_LD"/>
    <property type="match status" value="1"/>
</dbReference>
<gene>
    <name type="primary">Atp6ap1</name>
    <name type="synonym">Atp6ip1</name>
    <name type="synonym">Atp6s1</name>
</gene>
<evidence type="ECO:0000250" key="1">
    <source>
        <dbReference type="UniProtKB" id="Q15904"/>
    </source>
</evidence>
<evidence type="ECO:0000250" key="2">
    <source>
        <dbReference type="UniProtKB" id="Q9R1Q9"/>
    </source>
</evidence>
<evidence type="ECO:0000255" key="3"/>
<evidence type="ECO:0000269" key="4">
    <source>
    </source>
</evidence>
<evidence type="ECO:0000305" key="5"/>
<evidence type="ECO:0007744" key="6">
    <source>
        <dbReference type="PDB" id="6VQ6"/>
    </source>
</evidence>
<evidence type="ECO:0007744" key="7">
    <source>
        <dbReference type="PDB" id="6VQ7"/>
    </source>
</evidence>
<evidence type="ECO:0007744" key="8">
    <source>
        <dbReference type="PDB" id="6VQ8"/>
    </source>
</evidence>
<evidence type="ECO:0007744" key="9">
    <source>
        <dbReference type="PDB" id="6VQC"/>
    </source>
</evidence>
<evidence type="ECO:0007744" key="10">
    <source>
        <dbReference type="PDB" id="6VQG"/>
    </source>
</evidence>
<evidence type="ECO:0007744" key="11">
    <source>
        <dbReference type="PDB" id="6VQH"/>
    </source>
</evidence>
<evidence type="ECO:0007829" key="12">
    <source>
        <dbReference type="PDB" id="9B8O"/>
    </source>
</evidence>